<sequence>MKQPLLALQLLKLLLLLLLPLPPLPRALREARCCPEPCNCTPDGALRCPGPGAGLTRLSLAYLPVKVIPSQAFRGLNEVIKIEISQSDSLERIEANAFDNLLNLSEILIQNTKNLIHIEPGAFTNLPRLKYLSICNTGIRKFPDVTKIFSSETNFILEICDNLHITTIPGNAFQGMNNESITLKLYGNGFEEVQSHAFNGTTVISLVLKENVHLERIHNGAFRGATGPSILDISSTKLQALPSHGLESIQTLIATSSYSLKKLPSREKFANLLDATLTYPSHCCAFRNVPTKDYPAIFAESGQSGWDYDYGFHLPKTPRCAPEPDAFNPCEDIMGYDFLRVLIWLINILAIMGNMTVLFVLLTSRYKLTVPRFLMCNLSFADFCMGLYLLLIASVDSQTKGQYYNHAIDWQTGSGCNTAGFFTVFASELSVYTLTVITLERWHTITYAIHLDQKLRLRHAILIMLGGWLFSSLIAMLPLVGVSNYMKVSICFPMDVETTLSQIYILTILILNVVAFIIICACYIKIYFAVRNPELMATNKDTKIAKKMAILIFTDFTCMAPISFFAISAAFKMPLITVTNSKVLLVLFYPINSCANPFLYAIFTKTFRRDFFLLLGKFGCCKHRAELYRRKDFSAYTSNYKNGFTGSSKPSQSTLKLPALHCQGTALLDKTCYKEY</sequence>
<name>LSHR_CALJA</name>
<dbReference type="EMBL" id="U80673">
    <property type="protein sequence ID" value="AAB53698.1"/>
    <property type="molecule type" value="mRNA"/>
</dbReference>
<dbReference type="RefSeq" id="NP_001288772.1">
    <property type="nucleotide sequence ID" value="NM_001301843.1"/>
</dbReference>
<dbReference type="SMR" id="O02721"/>
<dbReference type="FunCoup" id="O02721">
    <property type="interactions" value="758"/>
</dbReference>
<dbReference type="STRING" id="9483.ENSCJAP00000019804"/>
<dbReference type="GlyCosmos" id="O02721">
    <property type="glycosylation" value="3 sites, No reported glycans"/>
</dbReference>
<dbReference type="Ensembl" id="ENSCJAT00000055166.4">
    <property type="protein sequence ID" value="ENSCJAP00000045777.2"/>
    <property type="gene ID" value="ENSCJAG00000010733.5"/>
</dbReference>
<dbReference type="GeneID" id="100385029"/>
<dbReference type="KEGG" id="cjc:100385029"/>
<dbReference type="CTD" id="3973"/>
<dbReference type="eggNOG" id="KOG2087">
    <property type="taxonomic scope" value="Eukaryota"/>
</dbReference>
<dbReference type="GeneTree" id="ENSGT00940000157364"/>
<dbReference type="HOGENOM" id="CLU_006130_1_1_1"/>
<dbReference type="InParanoid" id="O02721"/>
<dbReference type="OrthoDB" id="5981530at2759"/>
<dbReference type="Proteomes" id="UP000008225">
    <property type="component" value="Chromosome 14"/>
</dbReference>
<dbReference type="Bgee" id="ENSCJAG00000010733">
    <property type="expression patterns" value="Expressed in ovary"/>
</dbReference>
<dbReference type="GO" id="GO:0005886">
    <property type="term" value="C:plasma membrane"/>
    <property type="evidence" value="ECO:0000250"/>
    <property type="project" value="UniProtKB"/>
</dbReference>
<dbReference type="GO" id="GO:0008528">
    <property type="term" value="F:G protein-coupled peptide receptor activity"/>
    <property type="evidence" value="ECO:0007669"/>
    <property type="project" value="TreeGrafter"/>
</dbReference>
<dbReference type="GO" id="GO:0004964">
    <property type="term" value="F:luteinizing hormone receptor activity"/>
    <property type="evidence" value="ECO:0000250"/>
    <property type="project" value="UniProtKB"/>
</dbReference>
<dbReference type="GO" id="GO:0007189">
    <property type="term" value="P:adenylate cyclase-activating G protein-coupled receptor signaling pathway"/>
    <property type="evidence" value="ECO:0007669"/>
    <property type="project" value="TreeGrafter"/>
</dbReference>
<dbReference type="GO" id="GO:0071373">
    <property type="term" value="P:cellular response to luteinizing hormone stimulus"/>
    <property type="evidence" value="ECO:0000250"/>
    <property type="project" value="UniProtKB"/>
</dbReference>
<dbReference type="GO" id="GO:0009755">
    <property type="term" value="P:hormone-mediated signaling pathway"/>
    <property type="evidence" value="ECO:0007669"/>
    <property type="project" value="TreeGrafter"/>
</dbReference>
<dbReference type="GO" id="GO:0042700">
    <property type="term" value="P:luteinizing hormone signaling pathway"/>
    <property type="evidence" value="ECO:0000250"/>
    <property type="project" value="UniProtKB"/>
</dbReference>
<dbReference type="GO" id="GO:0008584">
    <property type="term" value="P:male gonad development"/>
    <property type="evidence" value="ECO:0007669"/>
    <property type="project" value="TreeGrafter"/>
</dbReference>
<dbReference type="GO" id="GO:0001541">
    <property type="term" value="P:ovarian follicle development"/>
    <property type="evidence" value="ECO:0007669"/>
    <property type="project" value="TreeGrafter"/>
</dbReference>
<dbReference type="GO" id="GO:0022602">
    <property type="term" value="P:ovulation cycle process"/>
    <property type="evidence" value="ECO:0007669"/>
    <property type="project" value="TreeGrafter"/>
</dbReference>
<dbReference type="GO" id="GO:0007200">
    <property type="term" value="P:phospholipase C-activating G protein-coupled receptor signaling pathway"/>
    <property type="evidence" value="ECO:0007669"/>
    <property type="project" value="TreeGrafter"/>
</dbReference>
<dbReference type="CDD" id="cd15359">
    <property type="entry name" value="7tmA_LHCGR"/>
    <property type="match status" value="1"/>
</dbReference>
<dbReference type="FunFam" id="1.20.1070.10:FF:000019">
    <property type="entry name" value="Lutropin-choriogonadotropic hormone receptor"/>
    <property type="match status" value="1"/>
</dbReference>
<dbReference type="FunFam" id="3.80.10.10:FF:000128">
    <property type="entry name" value="Lutropin-choriogonadotropic hormone receptor"/>
    <property type="match status" value="1"/>
</dbReference>
<dbReference type="Gene3D" id="1.20.1070.10">
    <property type="entry name" value="Rhodopsin 7-helix transmembrane proteins"/>
    <property type="match status" value="1"/>
</dbReference>
<dbReference type="Gene3D" id="3.80.10.10">
    <property type="entry name" value="Ribonuclease Inhibitor"/>
    <property type="match status" value="1"/>
</dbReference>
<dbReference type="InterPro" id="IPR000276">
    <property type="entry name" value="GPCR_Rhodpsn"/>
</dbReference>
<dbReference type="InterPro" id="IPR017452">
    <property type="entry name" value="GPCR_Rhodpsn_7TM"/>
</dbReference>
<dbReference type="InterPro" id="IPR002131">
    <property type="entry name" value="Gphrmn_rcpt_fam"/>
</dbReference>
<dbReference type="InterPro" id="IPR026906">
    <property type="entry name" value="LRR_5"/>
</dbReference>
<dbReference type="InterPro" id="IPR032675">
    <property type="entry name" value="LRR_dom_sf"/>
</dbReference>
<dbReference type="InterPro" id="IPR002273">
    <property type="entry name" value="LSH_rcpt"/>
</dbReference>
<dbReference type="PANTHER" id="PTHR24372">
    <property type="entry name" value="GLYCOPROTEIN HORMONE RECEPTOR"/>
    <property type="match status" value="1"/>
</dbReference>
<dbReference type="PANTHER" id="PTHR24372:SF1">
    <property type="entry name" value="LUTROPIN-CHORIOGONADOTROPIC HORMONE RECEPTOR"/>
    <property type="match status" value="1"/>
</dbReference>
<dbReference type="Pfam" id="PF00001">
    <property type="entry name" value="7tm_1"/>
    <property type="match status" value="1"/>
</dbReference>
<dbReference type="Pfam" id="PF13306">
    <property type="entry name" value="LRR_5"/>
    <property type="match status" value="2"/>
</dbReference>
<dbReference type="PRINTS" id="PR00373">
    <property type="entry name" value="GLYCHORMONER"/>
</dbReference>
<dbReference type="PRINTS" id="PR00237">
    <property type="entry name" value="GPCRRHODOPSN"/>
</dbReference>
<dbReference type="PRINTS" id="PR01144">
    <property type="entry name" value="LSHRECEPTOR"/>
</dbReference>
<dbReference type="SUPFAM" id="SSF81321">
    <property type="entry name" value="Family A G protein-coupled receptor-like"/>
    <property type="match status" value="1"/>
</dbReference>
<dbReference type="SUPFAM" id="SSF52058">
    <property type="entry name" value="L domain-like"/>
    <property type="match status" value="1"/>
</dbReference>
<dbReference type="PROSITE" id="PS00237">
    <property type="entry name" value="G_PROTEIN_RECEP_F1_1"/>
    <property type="match status" value="1"/>
</dbReference>
<dbReference type="PROSITE" id="PS50262">
    <property type="entry name" value="G_PROTEIN_RECEP_F1_2"/>
    <property type="match status" value="1"/>
</dbReference>
<gene>
    <name type="primary">LHCGR</name>
</gene>
<protein>
    <recommendedName>
        <fullName>Lutropin-choriogonadotropic hormone receptor</fullName>
        <shortName>LH/CG-R</shortName>
    </recommendedName>
    <alternativeName>
        <fullName>Luteinizing hormone receptor</fullName>
        <shortName>LSH-R</shortName>
    </alternativeName>
</protein>
<feature type="signal peptide" evidence="3">
    <location>
        <begin position="1"/>
        <end position="29"/>
    </location>
</feature>
<feature type="chain" id="PRO_0000012779" description="Lutropin-choriogonadotropic hormone receptor">
    <location>
        <begin position="30"/>
        <end position="676"/>
    </location>
</feature>
<feature type="topological domain" description="Extracellular" evidence="3">
    <location>
        <begin position="30"/>
        <end position="340"/>
    </location>
</feature>
<feature type="transmembrane region" description="Helical; Name=1" evidence="3">
    <location>
        <begin position="341"/>
        <end position="362"/>
    </location>
</feature>
<feature type="topological domain" description="Cytoplasmic" evidence="3">
    <location>
        <begin position="363"/>
        <end position="372"/>
    </location>
</feature>
<feature type="transmembrane region" description="Helical; Name=2" evidence="3">
    <location>
        <begin position="373"/>
        <end position="393"/>
    </location>
</feature>
<feature type="topological domain" description="Extracellular" evidence="3">
    <location>
        <begin position="394"/>
        <end position="416"/>
    </location>
</feature>
<feature type="transmembrane region" description="Helical; Name=3" evidence="3">
    <location>
        <begin position="417"/>
        <end position="439"/>
    </location>
</feature>
<feature type="topological domain" description="Cytoplasmic" evidence="3">
    <location>
        <begin position="440"/>
        <end position="459"/>
    </location>
</feature>
<feature type="transmembrane region" description="Helical; Name=4" evidence="3">
    <location>
        <begin position="460"/>
        <end position="482"/>
    </location>
</feature>
<feature type="topological domain" description="Extracellular" evidence="3">
    <location>
        <begin position="483"/>
        <end position="502"/>
    </location>
</feature>
<feature type="transmembrane region" description="Helical; Name=5" evidence="3">
    <location>
        <begin position="503"/>
        <end position="526"/>
    </location>
</feature>
<feature type="topological domain" description="Cytoplasmic" evidence="3">
    <location>
        <begin position="527"/>
        <end position="547"/>
    </location>
</feature>
<feature type="transmembrane region" description="Helical; Name=6" evidence="3">
    <location>
        <begin position="548"/>
        <end position="571"/>
    </location>
</feature>
<feature type="topological domain" description="Extracellular" evidence="3">
    <location>
        <begin position="572"/>
        <end position="582"/>
    </location>
</feature>
<feature type="transmembrane region" description="Helical; Name=7" evidence="3">
    <location>
        <begin position="583"/>
        <end position="604"/>
    </location>
</feature>
<feature type="topological domain" description="Cytoplasmic" evidence="3">
    <location>
        <begin position="605"/>
        <end position="676"/>
    </location>
</feature>
<feature type="repeat" description="LRR 1">
    <location>
        <begin position="126"/>
        <end position="151"/>
    </location>
</feature>
<feature type="repeat" description="LRR 2">
    <location>
        <begin position="153"/>
        <end position="175"/>
    </location>
</feature>
<feature type="repeat" description="LRR 3">
    <location>
        <begin position="176"/>
        <end position="200"/>
    </location>
</feature>
<feature type="repeat" description="LRR 4">
    <location>
        <begin position="201"/>
        <end position="224"/>
    </location>
</feature>
<feature type="repeat" description="LRR 5">
    <location>
        <begin position="225"/>
        <end position="248"/>
    </location>
</feature>
<feature type="modified residue" description="Sulfotyrosine" evidence="2">
    <location>
        <position position="308"/>
    </location>
</feature>
<feature type="lipid moiety-binding region" description="S-palmitoyl cysteine" evidence="1">
    <location>
        <position position="620"/>
    </location>
</feature>
<feature type="lipid moiety-binding region" description="S-palmitoyl cysteine" evidence="1">
    <location>
        <position position="621"/>
    </location>
</feature>
<feature type="glycosylation site" description="N-linked (GlcNAc...) asparagine" evidence="3">
    <location>
        <position position="103"/>
    </location>
</feature>
<feature type="glycosylation site" description="N-linked (GlcNAc...) asparagine" evidence="3">
    <location>
        <position position="178"/>
    </location>
</feature>
<feature type="glycosylation site" description="N-linked (GlcNAc...) asparagine" evidence="3">
    <location>
        <position position="199"/>
    </location>
</feature>
<feature type="disulfide bond" evidence="4">
    <location>
        <begin position="416"/>
        <end position="491"/>
    </location>
</feature>
<accession>O02721</accession>
<reference key="1">
    <citation type="journal article" date="1997" name="Endocrinology">
        <title>Cloning and functional expression of the luteinizing hormone receptor complementary deoxyribonucleic acid from the marmoset monkey testis: absence of sequences encoding exon 10 in other species.</title>
        <authorList>
            <person name="Zhang F.-P."/>
            <person name="Rannikko A.S."/>
            <person name="Manna P.R."/>
            <person name="Fraser H.M."/>
            <person name="Huhtaniemi I.T."/>
        </authorList>
    </citation>
    <scope>NUCLEOTIDE SEQUENCE [MRNA]</scope>
    <source>
        <tissue>Testis</tissue>
    </source>
</reference>
<keyword id="KW-1003">Cell membrane</keyword>
<keyword id="KW-1015">Disulfide bond</keyword>
<keyword id="KW-0297">G-protein coupled receptor</keyword>
<keyword id="KW-0325">Glycoprotein</keyword>
<keyword id="KW-0433">Leucine-rich repeat</keyword>
<keyword id="KW-0449">Lipoprotein</keyword>
<keyword id="KW-0472">Membrane</keyword>
<keyword id="KW-0564">Palmitate</keyword>
<keyword id="KW-0675">Receptor</keyword>
<keyword id="KW-1185">Reference proteome</keyword>
<keyword id="KW-0677">Repeat</keyword>
<keyword id="KW-0732">Signal</keyword>
<keyword id="KW-0765">Sulfation</keyword>
<keyword id="KW-0807">Transducer</keyword>
<keyword id="KW-0812">Transmembrane</keyword>
<keyword id="KW-1133">Transmembrane helix</keyword>
<comment type="function">
    <text evidence="2">Receptor for lutropin-choriogonadotropic hormone. The activity of this receptor is mediated by G proteins which activate adenylate cyclase.</text>
</comment>
<comment type="subcellular location">
    <subcellularLocation>
        <location evidence="2">Cell membrane</location>
        <topology evidence="2">Multi-pass membrane protein</topology>
    </subcellularLocation>
</comment>
<comment type="PTM">
    <text evidence="2">Sulfated.</text>
</comment>
<comment type="similarity">
    <text evidence="4">Belongs to the G-protein coupled receptor 1 family. FSH/LSH/TSH subfamily.</text>
</comment>
<evidence type="ECO:0000250" key="1"/>
<evidence type="ECO:0000250" key="2">
    <source>
        <dbReference type="UniProtKB" id="P22888"/>
    </source>
</evidence>
<evidence type="ECO:0000255" key="3"/>
<evidence type="ECO:0000255" key="4">
    <source>
        <dbReference type="PROSITE-ProRule" id="PRU00521"/>
    </source>
</evidence>
<organism>
    <name type="scientific">Callithrix jacchus</name>
    <name type="common">White-tufted-ear marmoset</name>
    <dbReference type="NCBI Taxonomy" id="9483"/>
    <lineage>
        <taxon>Eukaryota</taxon>
        <taxon>Metazoa</taxon>
        <taxon>Chordata</taxon>
        <taxon>Craniata</taxon>
        <taxon>Vertebrata</taxon>
        <taxon>Euteleostomi</taxon>
        <taxon>Mammalia</taxon>
        <taxon>Eutheria</taxon>
        <taxon>Euarchontoglires</taxon>
        <taxon>Primates</taxon>
        <taxon>Haplorrhini</taxon>
        <taxon>Platyrrhini</taxon>
        <taxon>Cebidae</taxon>
        <taxon>Callitrichinae</taxon>
        <taxon>Callithrix</taxon>
        <taxon>Callithrix</taxon>
    </lineage>
</organism>
<proteinExistence type="evidence at transcript level"/>